<dbReference type="EC" id="5.6.2.4" evidence="1"/>
<dbReference type="EMBL" id="EF127907">
    <property type="protein sequence ID" value="ABN09926.1"/>
    <property type="molecule type" value="Genomic_DNA"/>
</dbReference>
<dbReference type="SMR" id="P0DOI5"/>
<dbReference type="Proteomes" id="UP000101503">
    <property type="component" value="Genome"/>
</dbReference>
<dbReference type="GO" id="GO:0042025">
    <property type="term" value="C:host cell nucleus"/>
    <property type="evidence" value="ECO:0007669"/>
    <property type="project" value="UniProtKB-SubCell"/>
</dbReference>
<dbReference type="GO" id="GO:0005524">
    <property type="term" value="F:ATP binding"/>
    <property type="evidence" value="ECO:0007669"/>
    <property type="project" value="UniProtKB-KW"/>
</dbReference>
<dbReference type="GO" id="GO:0016887">
    <property type="term" value="F:ATP hydrolysis activity"/>
    <property type="evidence" value="ECO:0007669"/>
    <property type="project" value="RHEA"/>
</dbReference>
<dbReference type="GO" id="GO:0003688">
    <property type="term" value="F:DNA replication origin binding"/>
    <property type="evidence" value="ECO:0007669"/>
    <property type="project" value="InterPro"/>
</dbReference>
<dbReference type="GO" id="GO:0004386">
    <property type="term" value="F:helicase activity"/>
    <property type="evidence" value="ECO:0007669"/>
    <property type="project" value="UniProtKB-KW"/>
</dbReference>
<dbReference type="GO" id="GO:0008270">
    <property type="term" value="F:zinc ion binding"/>
    <property type="evidence" value="ECO:0007669"/>
    <property type="project" value="UniProtKB-KW"/>
</dbReference>
<dbReference type="GO" id="GO:0006260">
    <property type="term" value="P:DNA replication"/>
    <property type="evidence" value="ECO:0007669"/>
    <property type="project" value="UniProtKB-KW"/>
</dbReference>
<dbReference type="GO" id="GO:0039645">
    <property type="term" value="P:symbiont-mediated perturbation of host cell cycle G1/S transition checkpoint"/>
    <property type="evidence" value="ECO:0007669"/>
    <property type="project" value="UniProtKB-KW"/>
</dbReference>
<dbReference type="GO" id="GO:0052170">
    <property type="term" value="P:symbiont-mediated suppression of host innate immune response"/>
    <property type="evidence" value="ECO:0007669"/>
    <property type="project" value="UniProtKB-KW"/>
</dbReference>
<dbReference type="GO" id="GO:0039576">
    <property type="term" value="P:symbiont-mediated suppression of host JAK-STAT cascade via inhibition of JAK1 activity"/>
    <property type="evidence" value="ECO:0007669"/>
    <property type="project" value="UniProtKB-KW"/>
</dbReference>
<dbReference type="GO" id="GO:0039502">
    <property type="term" value="P:symbiont-mediated suppression of host type I interferon-mediated signaling pathway"/>
    <property type="evidence" value="ECO:0007669"/>
    <property type="project" value="UniProtKB-KW"/>
</dbReference>
<dbReference type="Gene3D" id="3.40.1310.20">
    <property type="match status" value="1"/>
</dbReference>
<dbReference type="Gene3D" id="1.10.287.110">
    <property type="entry name" value="DnaJ domain"/>
    <property type="match status" value="1"/>
</dbReference>
<dbReference type="Gene3D" id="1.20.1050.70">
    <property type="entry name" value="Large T antigen, SV40, domain 3"/>
    <property type="match status" value="1"/>
</dbReference>
<dbReference type="Gene3D" id="3.40.50.300">
    <property type="entry name" value="P-loop containing nucleotide triphosphate hydrolases"/>
    <property type="match status" value="1"/>
</dbReference>
<dbReference type="Gene3D" id="1.10.10.510">
    <property type="entry name" value="Zinc finger, large T-antigen D1 domain"/>
    <property type="match status" value="1"/>
</dbReference>
<dbReference type="InterPro" id="IPR001623">
    <property type="entry name" value="DnaJ_domain"/>
</dbReference>
<dbReference type="InterPro" id="IPR014015">
    <property type="entry name" value="Helicase_SF3_DNA-vir"/>
</dbReference>
<dbReference type="InterPro" id="IPR036869">
    <property type="entry name" value="J_dom_sf"/>
</dbReference>
<dbReference type="InterPro" id="IPR016392">
    <property type="entry name" value="Lg_T_Ag_polyomavir"/>
</dbReference>
<dbReference type="InterPro" id="IPR010932">
    <property type="entry name" value="Lg_T_Ag_Polyomavir_C"/>
</dbReference>
<dbReference type="InterPro" id="IPR027417">
    <property type="entry name" value="P-loop_NTPase"/>
</dbReference>
<dbReference type="InterPro" id="IPR003133">
    <property type="entry name" value="T_Ag_DNA-bd"/>
</dbReference>
<dbReference type="InterPro" id="IPR017910">
    <property type="entry name" value="Znf_lg_T-Ag_D1-typ"/>
</dbReference>
<dbReference type="InterPro" id="IPR037102">
    <property type="entry name" value="Znf_lg_T-Ag_D1_dom_sf"/>
</dbReference>
<dbReference type="Pfam" id="PF06431">
    <property type="entry name" value="Polyoma_lg_T_C"/>
    <property type="match status" value="1"/>
</dbReference>
<dbReference type="Pfam" id="PF02217">
    <property type="entry name" value="T_Ag_DNA_bind"/>
    <property type="match status" value="1"/>
</dbReference>
<dbReference type="PIRSF" id="PIRSF003368">
    <property type="entry name" value="Large_T_antigen_polyomaV"/>
    <property type="match status" value="1"/>
</dbReference>
<dbReference type="SMART" id="SM00271">
    <property type="entry name" value="DnaJ"/>
    <property type="match status" value="1"/>
</dbReference>
<dbReference type="SUPFAM" id="SSF46565">
    <property type="entry name" value="Chaperone J-domain"/>
    <property type="match status" value="1"/>
</dbReference>
<dbReference type="SUPFAM" id="SSF55464">
    <property type="entry name" value="Origin of replication-binding domain, RBD-like"/>
    <property type="match status" value="1"/>
</dbReference>
<dbReference type="SUPFAM" id="SSF52540">
    <property type="entry name" value="P-loop containing nucleoside triphosphate hydrolases"/>
    <property type="match status" value="1"/>
</dbReference>
<dbReference type="PROSITE" id="PS51206">
    <property type="entry name" value="SF3_HELICASE_1"/>
    <property type="match status" value="1"/>
</dbReference>
<dbReference type="PROSITE" id="PS51287">
    <property type="entry name" value="T_AG_OBD"/>
    <property type="match status" value="1"/>
</dbReference>
<dbReference type="PROSITE" id="PS51341">
    <property type="entry name" value="ZF_LTAG_D1"/>
    <property type="match status" value="1"/>
</dbReference>
<protein>
    <recommendedName>
        <fullName>Large T antigen</fullName>
        <shortName>LT</shortName>
        <shortName>LT-AG</shortName>
        <ecNumber evidence="1">5.6.2.4</ecNumber>
    </recommendedName>
    <alternativeName>
        <fullName evidence="6">DNA 3'-5' helicase large T antigen</fullName>
    </alternativeName>
</protein>
<comment type="function">
    <text evidence="1">Isoform large T antigen is a key early protein essential for both driving viral replication and inducing cellular transformation. Plays a role in viral genome replication by driving entry of quiescent cells into the cell cycle and by autoregulating the synthesis of viral early mRNA. Displays highly oncogenic activities by corrupting the host cellular checkpoint mechanisms that guard cell division and the transcription, replication, and repair of DNA. Participates in the modulation of cellular gene expression preceeding viral DNA replication. This step involves binding to host key cell cycle regulators retinoblastoma protein RB1/pRb and TP53. Induces the disassembly of host E2F1 transcription factors from RB1, thus promoting transcriptional activation of E2F1-regulated S-phase genes. Inhibits host TP53 binding to DNA, abrogating the ability of TP53 to stimulate gene expression. Plays the role of a TFIID-associated factor (TAF) in transcription initiation for all three RNA polymerases, by stabilizing the TBP-TFIIA complex on promoters. Initiates viral DNA replication and unwinding via interactions with the viral origin of replication. Binds two adjacent sites in the SV40 origin. The replication fork movement is facilitated by Large T antigen helicase activity. Has processive 3'-5' DNA helicase activity which requires a short 3' single-stranded region and ATP. Activates the transcription of viral late mRNA, through host TBP and TFIIA stabilization. Interferes with histone deacetylation mediated by HDAC1, leading to activation of transcription.</text>
</comment>
<comment type="catalytic activity">
    <reaction evidence="1">
        <text>Couples ATP hydrolysis with the unwinding of duplex DNA by translocating in the 3'-5' direction.</text>
        <dbReference type="EC" id="5.6.2.4"/>
    </reaction>
</comment>
<comment type="catalytic activity">
    <reaction evidence="1">
        <text>ATP + H2O = ADP + phosphate + H(+)</text>
        <dbReference type="Rhea" id="RHEA:13065"/>
        <dbReference type="ChEBI" id="CHEBI:15377"/>
        <dbReference type="ChEBI" id="CHEBI:15378"/>
        <dbReference type="ChEBI" id="CHEBI:30616"/>
        <dbReference type="ChEBI" id="CHEBI:43474"/>
        <dbReference type="ChEBI" id="CHEBI:456216"/>
        <dbReference type="EC" id="5.6.2.4"/>
    </reaction>
</comment>
<comment type="cofactor">
    <cofactor evidence="1">
        <name>Mg(2+)</name>
        <dbReference type="ChEBI" id="CHEBI:18420"/>
    </cofactor>
    <text evidence="1">DNA helicase activity requires Mg(2+).</text>
</comment>
<comment type="subunit">
    <text evidence="1">Forms homohexamers in the presence of ATP. Interacts with host HDAC1. Interacts (via LXCXE domain) with host RB1; the interaction induces the aberrant dissociation of RB1-E2F1 complex thereby disrupting RB1's activity. Interacts (via LXCXE domain) with host pRB-related proteins RBL1 and RBL2. Interacts (via C-terminus) with host TOP1 and POLA1 allowing DNA replication. Interacts with host TP53, inhibiting TP53 binding to DNA. Interacts with host preinitiation complex components TBP, TFIIA and TFIID to regulate transcription initiation.</text>
</comment>
<comment type="subcellular location">
    <subcellularLocation>
        <location evidence="1">Host nucleus</location>
    </subcellularLocation>
</comment>
<comment type="alternative products">
    <event type="alternative splicing"/>
    <isoform>
        <id>P0DOI5-1</id>
        <id>A3R4N4-1</id>
        <name>Large T antigen</name>
        <sequence type="displayed"/>
    </isoform>
    <isoform>
        <id>P0DOI8-1</id>
        <id>A3R4N5-1</id>
        <name>Small t antigen</name>
        <sequence type="external"/>
    </isoform>
</comment>
<comment type="domain">
    <text evidence="1">The J domain is essential for multiple viral activities, including virion assembly, viral DNA replication, transformation and transcriptional activation.</text>
</comment>
<comment type="domain">
    <text evidence="1">The LXCXE motif specifically binds to host pRB, RBL1, and RBL2.</text>
</comment>
<comment type="domain">
    <text evidence="1">The zinc finger region contributes to protein-protein interactions essential for the assembly of stable T-antigen hexamers at the origin of replication. The hexamers are required for subsequent alterations in the structure of origin DNA.</text>
</comment>
<comment type="domain">
    <text evidence="1">The ATP binding/ATPase domain is required for proper hexamer assembly and helicase activity.</text>
</comment>
<comment type="PTM">
    <text evidence="1">Phosphorylated on both serine and threonine residues. Small t antigen inhibits the dephosphorylation by the AC form of PP2A.</text>
</comment>
<comment type="PTM">
    <text evidence="1">O-Glycosylated near the C-terminal region.</text>
</comment>
<comment type="PTM">
    <text evidence="1">Acetylated by CBP in a TP53-dependent manner.</text>
</comment>
<reference key="1">
    <citation type="journal article" date="2007" name="J. Virol.">
        <title>Identification of a third human polyomavirus.</title>
        <authorList>
            <person name="Allander T."/>
            <person name="Andreasson K."/>
            <person name="Gupta S."/>
            <person name="Bjerkner A."/>
            <person name="Bogdanovic G."/>
            <person name="Persson M.A."/>
            <person name="Dalianis T."/>
            <person name="Ramqvist T."/>
            <person name="Andersson B."/>
        </authorList>
    </citation>
    <scope>NUCLEOTIDE SEQUENCE [GENOMIC DNA]</scope>
</reference>
<accession>P0DOI5</accession>
<accession>A3R4M9</accession>
<accession>A3R4N4</accession>
<accession>A3R4N9</accession>
<name>LT_POVKI</name>
<organismHost>
    <name type="scientific">Homo sapiens</name>
    <name type="common">Human</name>
    <dbReference type="NCBI Taxonomy" id="9606"/>
</organismHost>
<sequence length="641" mass="74312">MDKTLSREEAKQLMQLLCLDMSCWGNLPLMRRQYLVKCKEYHPDKGGNEESMKLLNSLYLKLQDSVSSVHDLNEEEDNIWQSSQIPTYGTPDWDEWWSQFNTYWEEELRCNESMPSSPKRSAPEEEPSCSQATPPKKKHAFDASLEFPKELLEFVSHAVFSNKCITCFVVHTTREKGEVLYKKLLQKYQCSFISKHAFYNTVLIFFLTPHKHRVSAINNFCKGHCTVSFLFCKGVNNPYGLYSRMCRQPFNLCEENIPGGLKENEFNPEDLFGEPKEPSLSWNQIANFALEFDIDDVYYLLGSYIRFATKPEECEKCSKNDDATHKRVHVQNHENAVLLQESKSQKNACTQAIDRVIAERRYNCVTLTRKKLLTKRFKKLFNEMDKIVVGERKILLYMASIAWYTGLNKKIDELVVRFLKLIVDNKPKHRYWLFKGPINSGKTTLATALLNLCGGKALNINIPSEKLPFELGVALDQYMVVFEDVKGQIGIEKQLPSGNGVNNLDNLRDYLDGCVEVNLEKKHVNKRSQIFPPGIVTMNEYCIPETVAVRFEKTVMFTIKRNLRESLEKTPQLLSQRILHSGIAMLLLLIWYRPVSDFDEEIQSNVVYWKEVLDNYIGLTEFATMQMNVTNGKNILEKWFE</sequence>
<organism>
    <name type="scientific">KI polyomavirus (isolate Stockholm 350)</name>
    <name type="common">KIPyV</name>
    <dbReference type="NCBI Taxonomy" id="423447"/>
    <lineage>
        <taxon>Viruses</taxon>
        <taxon>Monodnaviria</taxon>
        <taxon>Shotokuvirae</taxon>
        <taxon>Cossaviricota</taxon>
        <taxon>Papovaviricetes</taxon>
        <taxon>Sepolyvirales</taxon>
        <taxon>Polyomaviridae</taxon>
        <taxon>Betapolyomavirus</taxon>
        <taxon>Betapolyomavirus tertihominis</taxon>
    </lineage>
</organism>
<feature type="chain" id="PRO_0000294068" description="Large T antigen">
    <location>
        <begin position="1"/>
        <end position="641"/>
    </location>
</feature>
<feature type="domain" description="J">
    <location>
        <begin position="12"/>
        <end position="80"/>
    </location>
</feature>
<feature type="domain" description="SF3 helicase" evidence="2">
    <location>
        <begin position="410"/>
        <end position="572"/>
    </location>
</feature>
<feature type="DNA-binding region" description="T-ag OBD" evidence="3">
    <location>
        <begin position="148"/>
        <end position="263"/>
    </location>
</feature>
<feature type="zinc finger region" description="T-ag D1-type" evidence="4">
    <location>
        <begin position="277"/>
        <end position="369"/>
    </location>
</feature>
<feature type="region of interest" description="Disordered" evidence="5">
    <location>
        <begin position="114"/>
        <end position="136"/>
    </location>
</feature>
<feature type="short sequence motif" description="LXCXE motif" evidence="1">
    <location>
        <begin position="108"/>
        <end position="112"/>
    </location>
</feature>
<feature type="short sequence motif" description="Nuclear localization signal" evidence="1">
    <location>
        <begin position="134"/>
        <end position="141"/>
    </location>
</feature>
<feature type="binding site" evidence="4">
    <location>
        <position position="314"/>
    </location>
    <ligand>
        <name>Zn(2+)</name>
        <dbReference type="ChEBI" id="CHEBI:29105"/>
    </ligand>
</feature>
<feature type="binding site" evidence="4">
    <location>
        <position position="317"/>
    </location>
    <ligand>
        <name>Zn(2+)</name>
        <dbReference type="ChEBI" id="CHEBI:29105"/>
    </ligand>
</feature>
<feature type="binding site" evidence="4">
    <location>
        <position position="325"/>
    </location>
    <ligand>
        <name>Zn(2+)</name>
        <dbReference type="ChEBI" id="CHEBI:29105"/>
    </ligand>
</feature>
<feature type="binding site" evidence="4">
    <location>
        <position position="329"/>
    </location>
    <ligand>
        <name>Zn(2+)</name>
        <dbReference type="ChEBI" id="CHEBI:29105"/>
    </ligand>
</feature>
<feature type="binding site" evidence="2">
    <location>
        <begin position="436"/>
        <end position="443"/>
    </location>
    <ligand>
        <name>ATP</name>
        <dbReference type="ChEBI" id="CHEBI:30616"/>
    </ligand>
</feature>
<feature type="modified residue" description="N-acetylmethionine; by host" evidence="1">
    <location>
        <position position="1"/>
    </location>
</feature>
<feature type="modified residue" description="Phosphoserine; by host" evidence="1">
    <location>
        <position position="117"/>
    </location>
</feature>
<feature type="modified residue" description="Phosphothreonine; by host" evidence="1">
    <location>
        <position position="133"/>
    </location>
</feature>
<proteinExistence type="inferred from homology"/>
<keyword id="KW-0007">Acetylation</keyword>
<keyword id="KW-0025">Alternative splicing</keyword>
<keyword id="KW-0067">ATP-binding</keyword>
<keyword id="KW-0235">DNA replication</keyword>
<keyword id="KW-0238">DNA-binding</keyword>
<keyword id="KW-0244">Early protein</keyword>
<keyword id="KW-1078">G1/S host cell cycle checkpoint dysregulation by virus</keyword>
<keyword id="KW-0347">Helicase</keyword>
<keyword id="KW-1048">Host nucleus</keyword>
<keyword id="KW-0945">Host-virus interaction</keyword>
<keyword id="KW-0378">Hydrolase</keyword>
<keyword id="KW-1090">Inhibition of host innate immune response by virus</keyword>
<keyword id="KW-1114">Inhibition of host interferon signaling pathway by virus</keyword>
<keyword id="KW-1096">Inhibition of host JAK1 by virus</keyword>
<keyword id="KW-0922">Interferon antiviral system evasion</keyword>
<keyword id="KW-0413">Isomerase</keyword>
<keyword id="KW-0460">Magnesium</keyword>
<keyword id="KW-0479">Metal-binding</keyword>
<keyword id="KW-1121">Modulation of host cell cycle by virus</keyword>
<keyword id="KW-0547">Nucleotide-binding</keyword>
<keyword id="KW-0553">Oncogene</keyword>
<keyword id="KW-0597">Phosphoprotein</keyword>
<keyword id="KW-0899">Viral immunoevasion</keyword>
<keyword id="KW-0862">Zinc</keyword>
<keyword id="KW-0863">Zinc-finger</keyword>
<evidence type="ECO:0000250" key="1">
    <source>
        <dbReference type="UniProtKB" id="P03070"/>
    </source>
</evidence>
<evidence type="ECO:0000255" key="2">
    <source>
        <dbReference type="PROSITE-ProRule" id="PRU00551"/>
    </source>
</evidence>
<evidence type="ECO:0000255" key="3">
    <source>
        <dbReference type="PROSITE-ProRule" id="PRU00620"/>
    </source>
</evidence>
<evidence type="ECO:0000255" key="4">
    <source>
        <dbReference type="PROSITE-ProRule" id="PRU00671"/>
    </source>
</evidence>
<evidence type="ECO:0000256" key="5">
    <source>
        <dbReference type="SAM" id="MobiDB-lite"/>
    </source>
</evidence>
<evidence type="ECO:0000305" key="6"/>